<organism>
    <name type="scientific">Zea mays</name>
    <name type="common">Maize</name>
    <dbReference type="NCBI Taxonomy" id="4577"/>
    <lineage>
        <taxon>Eukaryota</taxon>
        <taxon>Viridiplantae</taxon>
        <taxon>Streptophyta</taxon>
        <taxon>Embryophyta</taxon>
        <taxon>Tracheophyta</taxon>
        <taxon>Spermatophyta</taxon>
        <taxon>Magnoliopsida</taxon>
        <taxon>Liliopsida</taxon>
        <taxon>Poales</taxon>
        <taxon>Poaceae</taxon>
        <taxon>PACMAD clade</taxon>
        <taxon>Panicoideae</taxon>
        <taxon>Andropogonodae</taxon>
        <taxon>Andropogoneae</taxon>
        <taxon>Tripsacinae</taxon>
        <taxon>Zea</taxon>
    </lineage>
</organism>
<dbReference type="MaizeGDB" id="123961"/>
<dbReference type="InParanoid" id="P80636"/>
<dbReference type="Proteomes" id="UP000007305">
    <property type="component" value="Unplaced"/>
</dbReference>
<accession>P80636</accession>
<protein>
    <recommendedName>
        <fullName>Unknown protein from spot 662 of 2D-PAGE of etiolated coleoptile</fullName>
    </recommendedName>
</protein>
<sequence>SGTSPLLPAITFILD</sequence>
<reference key="1">
    <citation type="journal article" date="1996" name="Theor. Appl. Genet.">
        <title>The maize two dimensional gel protein database: towards an integrated genome analysis program.</title>
        <authorList>
            <person name="Touzet P."/>
            <person name="Riccardi F."/>
            <person name="Morin C."/>
            <person name="Damerval C."/>
            <person name="Huet J.-C."/>
            <person name="Pernollet J.-C."/>
            <person name="Zivy M."/>
            <person name="de Vienne D."/>
        </authorList>
        <dbReference type="AGRICOLA" id="IND20551642"/>
    </citation>
    <scope>PROTEIN SEQUENCE</scope>
    <source>
        <tissue>Coleoptile</tissue>
    </source>
</reference>
<feature type="chain" id="PRO_0000055526" description="Unknown protein from spot 662 of 2D-PAGE of etiolated coleoptile">
    <location>
        <begin position="1" status="less than"/>
        <end position="15" status="greater than"/>
    </location>
</feature>
<feature type="non-terminal residue">
    <location>
        <position position="1"/>
    </location>
</feature>
<feature type="non-terminal residue">
    <location>
        <position position="15"/>
    </location>
</feature>
<proteinExistence type="evidence at protein level"/>
<keyword id="KW-0903">Direct protein sequencing</keyword>
<keyword id="KW-1185">Reference proteome</keyword>
<comment type="miscellaneous">
    <text>On the 2D-gel the determined pI of this unknown protein is: 4.9, its MW is: 32.3 kDa.</text>
</comment>
<name>UC30_MAIZE</name>